<dbReference type="EMBL" id="AC018849">
    <property type="protein sequence ID" value="AAF27136.1"/>
    <property type="status" value="ALT_SEQ"/>
    <property type="molecule type" value="Genomic_DNA"/>
</dbReference>
<dbReference type="EMBL" id="CP002684">
    <property type="protein sequence ID" value="AEE36399.1"/>
    <property type="molecule type" value="Genomic_DNA"/>
</dbReference>
<dbReference type="EMBL" id="AY064015">
    <property type="protein sequence ID" value="AAL36371.1"/>
    <property type="molecule type" value="mRNA"/>
</dbReference>
<dbReference type="EMBL" id="AY091419">
    <property type="protein sequence ID" value="AAM14358.1"/>
    <property type="molecule type" value="mRNA"/>
</dbReference>
<dbReference type="EMBL" id="AK118131">
    <property type="protein sequence ID" value="BAC42757.1"/>
    <property type="molecule type" value="mRNA"/>
</dbReference>
<dbReference type="PIR" id="H96835">
    <property type="entry name" value="H96835"/>
</dbReference>
<dbReference type="RefSeq" id="NP_178157.2">
    <molecule id="Q8VZM1-1"/>
    <property type="nucleotide sequence ID" value="NM_106690.6"/>
</dbReference>
<dbReference type="SMR" id="Q8VZM1"/>
<dbReference type="FunCoup" id="Q8VZM1">
    <property type="interactions" value="4187"/>
</dbReference>
<dbReference type="IntAct" id="Q8VZM1">
    <property type="interactions" value="6"/>
</dbReference>
<dbReference type="STRING" id="3702.Q8VZM1"/>
<dbReference type="iPTMnet" id="Q8VZM1"/>
<dbReference type="PaxDb" id="3702-AT1G80410.2"/>
<dbReference type="EnsemblPlants" id="AT1G80410.1">
    <molecule id="Q8VZM1-1"/>
    <property type="protein sequence ID" value="AT1G80410.1"/>
    <property type="gene ID" value="AT1G80410"/>
</dbReference>
<dbReference type="GeneID" id="844381"/>
<dbReference type="Gramene" id="AT1G80410.1">
    <molecule id="Q8VZM1-1"/>
    <property type="protein sequence ID" value="AT1G80410.1"/>
    <property type="gene ID" value="AT1G80410"/>
</dbReference>
<dbReference type="KEGG" id="ath:AT1G80410"/>
<dbReference type="Araport" id="AT1G80410"/>
<dbReference type="TAIR" id="AT1G80410">
    <property type="gene designation" value="NAA15"/>
</dbReference>
<dbReference type="eggNOG" id="KOG1156">
    <property type="taxonomic scope" value="Eukaryota"/>
</dbReference>
<dbReference type="HOGENOM" id="CLU_006686_0_0_1"/>
<dbReference type="InParanoid" id="Q8VZM1"/>
<dbReference type="OrthoDB" id="10263032at2759"/>
<dbReference type="PhylomeDB" id="Q8VZM1"/>
<dbReference type="CD-CODE" id="4299E36E">
    <property type="entry name" value="Nucleolus"/>
</dbReference>
<dbReference type="PRO" id="PR:Q8VZM1"/>
<dbReference type="Proteomes" id="UP000006548">
    <property type="component" value="Chromosome 1"/>
</dbReference>
<dbReference type="ExpressionAtlas" id="Q8VZM1">
    <property type="expression patterns" value="baseline and differential"/>
</dbReference>
<dbReference type="GO" id="GO:0005737">
    <property type="term" value="C:cytoplasm"/>
    <property type="evidence" value="ECO:0007669"/>
    <property type="project" value="UniProtKB-ARBA"/>
</dbReference>
<dbReference type="FunFam" id="1.25.40.1040:FF:000003">
    <property type="entry name" value="N-terminal acetyltransferase A, auxiliary subunit"/>
    <property type="match status" value="1"/>
</dbReference>
<dbReference type="FunFam" id="1.25.40.1010:FF:000002">
    <property type="entry name" value="N-terminal acetyltransferase catalytic subunit (NAT1)"/>
    <property type="match status" value="1"/>
</dbReference>
<dbReference type="Gene3D" id="1.25.40.1010">
    <property type="match status" value="1"/>
</dbReference>
<dbReference type="Gene3D" id="1.25.40.1040">
    <property type="match status" value="1"/>
</dbReference>
<dbReference type="InterPro" id="IPR021183">
    <property type="entry name" value="NatA_aux_su"/>
</dbReference>
<dbReference type="InterPro" id="IPR011990">
    <property type="entry name" value="TPR-like_helical_dom_sf"/>
</dbReference>
<dbReference type="InterPro" id="IPR019734">
    <property type="entry name" value="TPR_rpt"/>
</dbReference>
<dbReference type="PANTHER" id="PTHR22767:SF2">
    <property type="entry name" value="N(ALPHA)-ACETYLTRANSFERASE 15_16, ISOFORM A"/>
    <property type="match status" value="1"/>
</dbReference>
<dbReference type="PANTHER" id="PTHR22767">
    <property type="entry name" value="N-TERMINAL ACETYLTRANSFERASE-RELATED"/>
    <property type="match status" value="1"/>
</dbReference>
<dbReference type="Pfam" id="PF12569">
    <property type="entry name" value="NatA_aux_su"/>
    <property type="match status" value="1"/>
</dbReference>
<dbReference type="Pfam" id="PF00515">
    <property type="entry name" value="TPR_1"/>
    <property type="match status" value="1"/>
</dbReference>
<dbReference type="PIRSF" id="PIRSF000422">
    <property type="entry name" value="N-terminal-AcTrfase-A_aux_su"/>
    <property type="match status" value="1"/>
</dbReference>
<dbReference type="SMART" id="SM00028">
    <property type="entry name" value="TPR"/>
    <property type="match status" value="2"/>
</dbReference>
<dbReference type="SUPFAM" id="SSF48452">
    <property type="entry name" value="TPR-like"/>
    <property type="match status" value="3"/>
</dbReference>
<dbReference type="PROSITE" id="PS50005">
    <property type="entry name" value="TPR"/>
    <property type="match status" value="4"/>
</dbReference>
<dbReference type="PROSITE" id="PS50293">
    <property type="entry name" value="TPR_REGION"/>
    <property type="match status" value="3"/>
</dbReference>
<organism evidence="16">
    <name type="scientific">Arabidopsis thaliana</name>
    <name type="common">Mouse-ear cress</name>
    <dbReference type="NCBI Taxonomy" id="3702"/>
    <lineage>
        <taxon>Eukaryota</taxon>
        <taxon>Viridiplantae</taxon>
        <taxon>Streptophyta</taxon>
        <taxon>Embryophyta</taxon>
        <taxon>Tracheophyta</taxon>
        <taxon>Spermatophyta</taxon>
        <taxon>Magnoliopsida</taxon>
        <taxon>eudicotyledons</taxon>
        <taxon>Gunneridae</taxon>
        <taxon>Pentapetalae</taxon>
        <taxon>rosids</taxon>
        <taxon>malvids</taxon>
        <taxon>Brassicales</taxon>
        <taxon>Brassicaceae</taxon>
        <taxon>Camelineae</taxon>
        <taxon>Arabidopsis</taxon>
    </lineage>
</organism>
<evidence type="ECO:0000255" key="1"/>
<evidence type="ECO:0000255" key="2">
    <source>
        <dbReference type="PROSITE-ProRule" id="PRU00339"/>
    </source>
</evidence>
<evidence type="ECO:0000256" key="3">
    <source>
        <dbReference type="SAM" id="MobiDB-lite"/>
    </source>
</evidence>
<evidence type="ECO:0000269" key="4">
    <source>
    </source>
</evidence>
<evidence type="ECO:0000269" key="5">
    <source>
    </source>
</evidence>
<evidence type="ECO:0000269" key="6">
    <source>
    </source>
</evidence>
<evidence type="ECO:0000269" key="7">
    <source>
    </source>
</evidence>
<evidence type="ECO:0000269" key="8">
    <source>
    </source>
</evidence>
<evidence type="ECO:0000269" key="9">
    <source>
    </source>
</evidence>
<evidence type="ECO:0000303" key="10">
    <source>
    </source>
</evidence>
<evidence type="ECO:0000303" key="11">
    <source>
    </source>
</evidence>
<evidence type="ECO:0000303" key="12">
    <source>
    </source>
</evidence>
<evidence type="ECO:0000305" key="13"/>
<evidence type="ECO:0000312" key="14">
    <source>
        <dbReference type="Araport" id="AT1G80410"/>
    </source>
</evidence>
<evidence type="ECO:0000312" key="15">
    <source>
        <dbReference type="EMBL" id="AAF27136.1"/>
    </source>
</evidence>
<evidence type="ECO:0000312" key="16">
    <source>
        <dbReference type="EMBL" id="AAL36371.1"/>
    </source>
</evidence>
<sequence>MGASLPPKEANLFKLIVKSYETKQYKKGLKAADAILKKFPDHGETLSMKGLTLNCMDRKTEAYELVRLGVKNDIKSHVCWHVLGLLYRSDREYREAIKCYRNALRIDPDNLEILRDLSLLQAQMRDLSGFVETRQQLLTLKPNHRMNWIGFAVSQHLNANASKAVEILEAYEGTLEDDYPPENELIEHTEMILYKVSLLEESGSFDKALEELHKKEPKIVDKLSYKEQEVSLLSKVGRLEEANKLYRVLLSMNPDNYRYHEGLQKCLGLYSESGQYSSDQIEKLNALYQSLSEQYTRSSAVKRIPLDFLQDENFKEAVAKYIKPLLTKGVPSLFSDLSSLYDHPRKPDILEQLVVEMKHSIGTTGSFPGSDVKEPPSTLLWTLFFLAQHYDRRGQYDVALCKIDEAIAHTPTVIDLYSVKSRIMKHAGDLTAAAALADEARGMDLADRYINSECVKRMLQADQVPLAEKTAVLFTKEGDQLNNLHDMQCMWYDLASGDSYFRQGDLGRALKKFLAVEKHYADISEDQFDFHSYCLRKMTLRSYVDMLKFQDRLHSFPYFHKAAIRAIRCYLKLHDSPKSTAGEDEMSKLAPAQKKKIKKQKKAEARAKKEAESKSEESTASGASKSGKRNVKPVDPDPHGQKLIQVEEPMAEASKYLRLLQKHSPNSLETHLLSFEVNMRKQKFLLAFQAVKQLLKLGAENPDSHRSLVKFFLMTESISAPTTEAEKLRWRVLEAERPSISQLQNKSLMEANKEFLGRHEDSLVHRAAYAEMLYILDPSKKTEAIKIIEDSTNKVVQTNEALGQAREWKLKDCIAVHTLLDTVLLDSQAASRWKSRCAEYFPCSTHFEGKHCSLMPDSVYNSSRKSNENGDTPNHPMGQTELSDGQLEAFKSLSVAT</sequence>
<proteinExistence type="evidence at protein level"/>
<keyword id="KW-0025">Alternative splicing</keyword>
<keyword id="KW-1185">Reference proteome</keyword>
<keyword id="KW-0677">Repeat</keyword>
<keyword id="KW-0802">TPR repeat</keyword>
<protein>
    <recommendedName>
        <fullName evidence="12">N-terminal acetyltransferase A complex auxiliary subunit NAA15</fullName>
        <shortName evidence="12">AtNAA15</shortName>
    </recommendedName>
    <alternativeName>
        <fullName evidence="11">Protein OMISHA</fullName>
    </alternativeName>
</protein>
<feature type="chain" id="PRO_0000439079" description="N-terminal acetyltransferase A complex auxiliary subunit NAA15">
    <location>
        <begin position="1"/>
        <end position="897"/>
    </location>
</feature>
<feature type="repeat" description="TPR 1" evidence="2">
    <location>
        <begin position="77"/>
        <end position="110"/>
    </location>
</feature>
<feature type="repeat" description="TPR 2" evidence="2">
    <location>
        <begin position="111"/>
        <end position="144"/>
    </location>
</feature>
<feature type="repeat" description="TPR 3" evidence="1">
    <location>
        <begin position="189"/>
        <end position="222"/>
    </location>
</feature>
<feature type="repeat" description="TPR 4" evidence="2">
    <location>
        <begin position="223"/>
        <end position="256"/>
    </location>
</feature>
<feature type="repeat" description="TPR 5" evidence="1">
    <location>
        <begin position="298"/>
        <end position="331"/>
    </location>
</feature>
<feature type="repeat" description="TPR 6" evidence="2">
    <location>
        <begin position="380"/>
        <end position="413"/>
    </location>
</feature>
<feature type="repeat" description="TPR 7" evidence="1">
    <location>
        <begin position="488"/>
        <end position="523"/>
    </location>
</feature>
<feature type="region of interest" description="Disordered" evidence="3">
    <location>
        <begin position="578"/>
        <end position="640"/>
    </location>
</feature>
<feature type="region of interest" description="Disordered" evidence="3">
    <location>
        <begin position="863"/>
        <end position="897"/>
    </location>
</feature>
<feature type="compositionally biased region" description="Basic and acidic residues" evidence="3">
    <location>
        <begin position="602"/>
        <end position="617"/>
    </location>
</feature>
<feature type="compositionally biased region" description="Polar residues" evidence="3">
    <location>
        <begin position="863"/>
        <end position="872"/>
    </location>
</feature>
<accession>Q8VZM1</accession>
<accession>Q9M8L0</accession>
<comment type="function">
    <text evidence="4 6 8 9">Auxiliary subunit of the NatA N-alpha-acetyltransferase complex. Required for male gametocyte development, embryogenesis, suspensor development and the formation of the quiescent center (QC) in the root meristem (PubMed:27385766, PubMed:27610925). Involved in plant immunity through the regulation of SNC1 stability (PubMed:25966763). Required for embryo development (PubMed:15266054).</text>
</comment>
<comment type="subunit">
    <text evidence="7 8">Part of the NatA complex. Associates with ribosomes. Interacts with NAA10.</text>
</comment>
<comment type="alternative products">
    <event type="alternative splicing"/>
    <isoform>
        <id>Q8VZM1-1</id>
        <name>1</name>
        <sequence type="displayed"/>
    </isoform>
    <text evidence="13">A number of isoforms are produced. According to EST sequences.</text>
</comment>
<comment type="tissue specificity">
    <text evidence="7">Expressed in leaves, roots, shoots and flowers.</text>
</comment>
<comment type="induction">
    <text evidence="7">Down-regulated upon abscisic acid treatment.</text>
</comment>
<comment type="disruption phenotype">
    <text evidence="5 6 8">Embryo lethal when homozygous.</text>
</comment>
<comment type="sequence caution" evidence="13">
    <conflict type="erroneous gene model prediction">
        <sequence resource="EMBL-CDS" id="AAF27136"/>
    </conflict>
</comment>
<reference key="1">
    <citation type="journal article" date="2000" name="Nature">
        <title>Sequence and analysis of chromosome 1 of the plant Arabidopsis thaliana.</title>
        <authorList>
            <person name="Theologis A."/>
            <person name="Ecker J.R."/>
            <person name="Palm C.J."/>
            <person name="Federspiel N.A."/>
            <person name="Kaul S."/>
            <person name="White O."/>
            <person name="Alonso J."/>
            <person name="Altafi H."/>
            <person name="Araujo R."/>
            <person name="Bowman C.L."/>
            <person name="Brooks S.Y."/>
            <person name="Buehler E."/>
            <person name="Chan A."/>
            <person name="Chao Q."/>
            <person name="Chen H."/>
            <person name="Cheuk R.F."/>
            <person name="Chin C.W."/>
            <person name="Chung M.K."/>
            <person name="Conn L."/>
            <person name="Conway A.B."/>
            <person name="Conway A.R."/>
            <person name="Creasy T.H."/>
            <person name="Dewar K."/>
            <person name="Dunn P."/>
            <person name="Etgu P."/>
            <person name="Feldblyum T.V."/>
            <person name="Feng J.-D."/>
            <person name="Fong B."/>
            <person name="Fujii C.Y."/>
            <person name="Gill J.E."/>
            <person name="Goldsmith A.D."/>
            <person name="Haas B."/>
            <person name="Hansen N.F."/>
            <person name="Hughes B."/>
            <person name="Huizar L."/>
            <person name="Hunter J.L."/>
            <person name="Jenkins J."/>
            <person name="Johnson-Hopson C."/>
            <person name="Khan S."/>
            <person name="Khaykin E."/>
            <person name="Kim C.J."/>
            <person name="Koo H.L."/>
            <person name="Kremenetskaia I."/>
            <person name="Kurtz D.B."/>
            <person name="Kwan A."/>
            <person name="Lam B."/>
            <person name="Langin-Hooper S."/>
            <person name="Lee A."/>
            <person name="Lee J.M."/>
            <person name="Lenz C.A."/>
            <person name="Li J.H."/>
            <person name="Li Y.-P."/>
            <person name="Lin X."/>
            <person name="Liu S.X."/>
            <person name="Liu Z.A."/>
            <person name="Luros J.S."/>
            <person name="Maiti R."/>
            <person name="Marziali A."/>
            <person name="Militscher J."/>
            <person name="Miranda M."/>
            <person name="Nguyen M."/>
            <person name="Nierman W.C."/>
            <person name="Osborne B.I."/>
            <person name="Pai G."/>
            <person name="Peterson J."/>
            <person name="Pham P.K."/>
            <person name="Rizzo M."/>
            <person name="Rooney T."/>
            <person name="Rowley D."/>
            <person name="Sakano H."/>
            <person name="Salzberg S.L."/>
            <person name="Schwartz J.R."/>
            <person name="Shinn P."/>
            <person name="Southwick A.M."/>
            <person name="Sun H."/>
            <person name="Tallon L.J."/>
            <person name="Tambunga G."/>
            <person name="Toriumi M.J."/>
            <person name="Town C.D."/>
            <person name="Utterback T."/>
            <person name="Van Aken S."/>
            <person name="Vaysberg M."/>
            <person name="Vysotskaia V.S."/>
            <person name="Walker M."/>
            <person name="Wu D."/>
            <person name="Yu G."/>
            <person name="Fraser C.M."/>
            <person name="Venter J.C."/>
            <person name="Davis R.W."/>
        </authorList>
    </citation>
    <scope>NUCLEOTIDE SEQUENCE [LARGE SCALE GENOMIC DNA]</scope>
    <source>
        <strain>cv. Columbia</strain>
    </source>
</reference>
<reference key="2">
    <citation type="journal article" date="2017" name="Plant J.">
        <title>Araport11: a complete reannotation of the Arabidopsis thaliana reference genome.</title>
        <authorList>
            <person name="Cheng C.Y."/>
            <person name="Krishnakumar V."/>
            <person name="Chan A.P."/>
            <person name="Thibaud-Nissen F."/>
            <person name="Schobel S."/>
            <person name="Town C.D."/>
        </authorList>
    </citation>
    <scope>GENOME REANNOTATION</scope>
    <source>
        <strain>cv. Columbia</strain>
    </source>
</reference>
<reference key="3">
    <citation type="journal article" date="2003" name="Science">
        <title>Empirical analysis of transcriptional activity in the Arabidopsis genome.</title>
        <authorList>
            <person name="Yamada K."/>
            <person name="Lim J."/>
            <person name="Dale J.M."/>
            <person name="Chen H."/>
            <person name="Shinn P."/>
            <person name="Palm C.J."/>
            <person name="Southwick A.M."/>
            <person name="Wu H.C."/>
            <person name="Kim C.J."/>
            <person name="Nguyen M."/>
            <person name="Pham P.K."/>
            <person name="Cheuk R.F."/>
            <person name="Karlin-Newmann G."/>
            <person name="Liu S.X."/>
            <person name="Lam B."/>
            <person name="Sakano H."/>
            <person name="Wu T."/>
            <person name="Yu G."/>
            <person name="Miranda M."/>
            <person name="Quach H.L."/>
            <person name="Tripp M."/>
            <person name="Chang C.H."/>
            <person name="Lee J.M."/>
            <person name="Toriumi M.J."/>
            <person name="Chan M.M."/>
            <person name="Tang C.C."/>
            <person name="Onodera C.S."/>
            <person name="Deng J.M."/>
            <person name="Akiyama K."/>
            <person name="Ansari Y."/>
            <person name="Arakawa T."/>
            <person name="Banh J."/>
            <person name="Banno F."/>
            <person name="Bowser L."/>
            <person name="Brooks S.Y."/>
            <person name="Carninci P."/>
            <person name="Chao Q."/>
            <person name="Choy N."/>
            <person name="Enju A."/>
            <person name="Goldsmith A.D."/>
            <person name="Gurjal M."/>
            <person name="Hansen N.F."/>
            <person name="Hayashizaki Y."/>
            <person name="Johnson-Hopson C."/>
            <person name="Hsuan V.W."/>
            <person name="Iida K."/>
            <person name="Karnes M."/>
            <person name="Khan S."/>
            <person name="Koesema E."/>
            <person name="Ishida J."/>
            <person name="Jiang P.X."/>
            <person name="Jones T."/>
            <person name="Kawai J."/>
            <person name="Kamiya A."/>
            <person name="Meyers C."/>
            <person name="Nakajima M."/>
            <person name="Narusaka M."/>
            <person name="Seki M."/>
            <person name="Sakurai T."/>
            <person name="Satou M."/>
            <person name="Tamse R."/>
            <person name="Vaysberg M."/>
            <person name="Wallender E.K."/>
            <person name="Wong C."/>
            <person name="Yamamura Y."/>
            <person name="Yuan S."/>
            <person name="Shinozaki K."/>
            <person name="Davis R.W."/>
            <person name="Theologis A."/>
            <person name="Ecker J.R."/>
        </authorList>
    </citation>
    <scope>NUCLEOTIDE SEQUENCE [LARGE SCALE MRNA]</scope>
    <source>
        <strain>cv. Columbia</strain>
    </source>
</reference>
<reference key="4">
    <citation type="journal article" date="2002" name="Science">
        <title>Functional annotation of a full-length Arabidopsis cDNA collection.</title>
        <authorList>
            <person name="Seki M."/>
            <person name="Narusaka M."/>
            <person name="Kamiya A."/>
            <person name="Ishida J."/>
            <person name="Satou M."/>
            <person name="Sakurai T."/>
            <person name="Nakajima M."/>
            <person name="Enju A."/>
            <person name="Akiyama K."/>
            <person name="Oono Y."/>
            <person name="Muramatsu M."/>
            <person name="Hayashizaki Y."/>
            <person name="Kawai J."/>
            <person name="Carninci P."/>
            <person name="Itoh M."/>
            <person name="Ishii Y."/>
            <person name="Arakawa T."/>
            <person name="Shibata K."/>
            <person name="Shinagawa A."/>
            <person name="Shinozaki K."/>
        </authorList>
    </citation>
    <scope>NUCLEOTIDE SEQUENCE [LARGE SCALE MRNA]</scope>
    <source>
        <strain>cv. Columbia</strain>
    </source>
</reference>
<reference key="5">
    <citation type="journal article" date="2004" name="Plant Physiol.">
        <title>Identification of genes required for embryo development in Arabidopsis.</title>
        <authorList>
            <person name="Tzafrir I."/>
            <person name="Pena-Muralla R."/>
            <person name="Dickerman A."/>
            <person name="Berg M."/>
            <person name="Rogers R."/>
            <person name="Hutchens S."/>
            <person name="Sweeney T.C."/>
            <person name="McElver J."/>
            <person name="Aux G."/>
            <person name="Patton D."/>
            <person name="Meinke D."/>
        </authorList>
    </citation>
    <scope>FUNCTION</scope>
</reference>
<reference key="6">
    <citation type="journal article" date="2007" name="Genome Biol.">
        <title>Genetic subtraction profiling identifies genes essential for Arabidopsis reproduction and reveals interaction between the female gametophyte and the maternal sporophyte.</title>
        <authorList>
            <person name="Johnston A.J."/>
            <person name="Meier P."/>
            <person name="Gheyselinck J."/>
            <person name="Wuest S.E.J."/>
            <person name="Federer M."/>
            <person name="Schlagenhauf E."/>
            <person name="Becker J.D."/>
            <person name="Grossniklaus U."/>
        </authorList>
    </citation>
    <scope>DISRUPTION PHENOTYPE</scope>
</reference>
<reference key="7">
    <citation type="journal article" date="2007" name="Mol. Cell. Proteomics">
        <title>Multidimensional protein identification technology (MudPIT) analysis of ubiquitinated proteins in plants.</title>
        <authorList>
            <person name="Maor R."/>
            <person name="Jones A."/>
            <person name="Nuehse T.S."/>
            <person name="Studholme D.J."/>
            <person name="Peck S.C."/>
            <person name="Shirasu K."/>
        </authorList>
    </citation>
    <scope>IDENTIFICATION BY MASS SPECTROMETRY [LARGE SCALE ANALYSIS]</scope>
    <source>
        <strain>cv. Landsberg erecta</strain>
    </source>
</reference>
<reference key="8">
    <citation type="journal article" date="2015" name="Nat. Commun.">
        <title>Downregulation of N-terminal acetylation triggers ABA-mediated drought responses in Arabidopsis.</title>
        <authorList>
            <person name="Linster E."/>
            <person name="Stephan I."/>
            <person name="Bienvenut W.V."/>
            <person name="Maple-Groedem J."/>
            <person name="Myklebust L.M."/>
            <person name="Huber M."/>
            <person name="Reichelt M."/>
            <person name="Sticht C."/>
            <person name="Moeller S.G."/>
            <person name="Meinnel T."/>
            <person name="Arnesen T."/>
            <person name="Giglione C."/>
            <person name="Hell R."/>
            <person name="Wirtz M."/>
        </authorList>
    </citation>
    <scope>FUNCTION</scope>
    <scope>TISSUE SPECIFICITY</scope>
    <scope>INTERACTION WITH NAA10</scope>
    <scope>INDUCTION BY ABSCISIC ACID</scope>
    <source>
        <strain>cv. Columbia</strain>
    </source>
</reference>
<reference key="9">
    <citation type="journal article" date="2015" name="Plant Cell">
        <title>Two N-terminal acetyltransferases antagonistically regulate the stability of a nod-like receptor in Arabidopsis.</title>
        <authorList>
            <person name="Xu F."/>
            <person name="Huang Y."/>
            <person name="Li L."/>
            <person name="Gannon P."/>
            <person name="Linster E."/>
            <person name="Huber M."/>
            <person name="Kapos P."/>
            <person name="Bienvenut W."/>
            <person name="Polevoda B."/>
            <person name="Meinnel T."/>
            <person name="Hell R."/>
            <person name="Giglione C."/>
            <person name="Zhang Y."/>
            <person name="Wirtz M."/>
            <person name="Chen S."/>
            <person name="Li X."/>
        </authorList>
    </citation>
    <scope>FUNCTION</scope>
    <scope>DISRUPTION PHENOTYPE</scope>
</reference>
<reference key="10">
    <citation type="journal article" date="2016" name="J. Exp. Bot.">
        <title>Protein N-terminal acetylation is required for embryogenesis in Arabidopsis.</title>
        <authorList>
            <person name="Feng J."/>
            <person name="Li R."/>
            <person name="Yu J."/>
            <person name="Ma S."/>
            <person name="Wu C."/>
            <person name="Li Y."/>
            <person name="Cao Y."/>
            <person name="Ma L."/>
        </authorList>
    </citation>
    <scope>FUNCTION</scope>
    <scope>DISRUPTION PHENOTYPE</scope>
    <scope>INTERACTION WITH NAA10</scope>
    <source>
        <strain>cv. Columbia</strain>
    </source>
</reference>
<reference key="11">
    <citation type="journal article" date="2016" name="Plant Signal. Behav.">
        <title>NatA is required for suspensor development in Arabidopsis.</title>
        <authorList>
            <person name="Feng J."/>
            <person name="Ma L."/>
        </authorList>
    </citation>
    <scope>FUNCTION</scope>
</reference>
<gene>
    <name evidence="12" type="primary">NAA15</name>
    <name evidence="10" type="synonym">EMB2753</name>
    <name evidence="12" type="synonym">MUSE6</name>
    <name evidence="11" type="synonym">OMA</name>
    <name evidence="14" type="ordered locus">At1g80410</name>
    <name evidence="15" type="ORF">T21F11.26</name>
</gene>
<name>NAA15_ARATH</name>